<comment type="function">
    <text evidence="1">This protein binds directly to 26S ribosomal RNA.</text>
</comment>
<comment type="function">
    <text evidence="2">Component of the ribosome, a large ribonucleoprotein complex responsible for the synthesis of proteins in the cell. The small ribosomal subunit (SSU) binds messenger RNAs (mRNAs) and translates the encoded message by selecting cognate aminoacyl-transfer RNA (tRNA) molecules. The large subunit (LSU) contains the ribosomal catalytic site termed the peptidyl transferase center (PTC), which catalyzes the formation of peptide bonds, thereby polymerizing the amino acids delivered by tRNAs into a polypeptide chain. The nascent polypeptides leave the ribosome through a tunnel in the LSU and interact with protein factors that function in enzymatic processing, targeting, and the membrane insertion of nascent chains at the exit of the ribosomal tunnel.</text>
</comment>
<comment type="subunit">
    <text evidence="2">Component of the large ribosomal subunit (LSU). Mature yeast ribosomes consist of a small (40S) and a large (60S) subunit. The 40S small subunit contains 1 molecule of ribosomal RNA (18S rRNA) and at least 33 different proteins. The large 60S subunit contains 3 rRNA molecules (25S, 5.8S and 5S rRNA) and at least 46 different proteins.</text>
</comment>
<comment type="subcellular location">
    <subcellularLocation>
        <location evidence="3">Cytoplasm</location>
    </subcellularLocation>
    <subcellularLocation>
        <location evidence="3">Nucleus</location>
        <location evidence="3">Nucleolus</location>
    </subcellularLocation>
</comment>
<comment type="miscellaneous">
    <text>There are 2 genes for uL11 in S.pombe.</text>
</comment>
<comment type="similarity">
    <text evidence="4">Belongs to the universal ribosomal protein uL11 family.</text>
</comment>
<proteinExistence type="inferred from homology"/>
<gene>
    <name type="primary">rpl1201</name>
    <name type="ORF">SPCC16C4.13c</name>
</gene>
<organism>
    <name type="scientific">Schizosaccharomyces pombe (strain 972 / ATCC 24843)</name>
    <name type="common">Fission yeast</name>
    <dbReference type="NCBI Taxonomy" id="284812"/>
    <lineage>
        <taxon>Eukaryota</taxon>
        <taxon>Fungi</taxon>
        <taxon>Dikarya</taxon>
        <taxon>Ascomycota</taxon>
        <taxon>Taphrinomycotina</taxon>
        <taxon>Schizosaccharomycetes</taxon>
        <taxon>Schizosaccharomycetales</taxon>
        <taxon>Schizosaccharomycetaceae</taxon>
        <taxon>Schizosaccharomyces</taxon>
    </lineage>
</organism>
<evidence type="ECO:0000250" key="1"/>
<evidence type="ECO:0000250" key="2">
    <source>
        <dbReference type="UniProtKB" id="P0CX53"/>
    </source>
</evidence>
<evidence type="ECO:0000269" key="3">
    <source>
    </source>
</evidence>
<evidence type="ECO:0000305" key="4"/>
<accession>P0CT83</accession>
<accession>O75000</accession>
<feature type="chain" id="PRO_0000104466" description="Large ribosomal subunit protein uL11A">
    <location>
        <begin position="1"/>
        <end position="165"/>
    </location>
</feature>
<feature type="modified residue" description="N5-methylarginine" evidence="1">
    <location>
        <position position="67"/>
    </location>
</feature>
<name>RL12A_SCHPO</name>
<reference key="1">
    <citation type="journal article" date="2002" name="Nature">
        <title>The genome sequence of Schizosaccharomyces pombe.</title>
        <authorList>
            <person name="Wood V."/>
            <person name="Gwilliam R."/>
            <person name="Rajandream M.A."/>
            <person name="Lyne M.H."/>
            <person name="Lyne R."/>
            <person name="Stewart A."/>
            <person name="Sgouros J.G."/>
            <person name="Peat N."/>
            <person name="Hayles J."/>
            <person name="Baker S.G."/>
            <person name="Basham D."/>
            <person name="Bowman S."/>
            <person name="Brooks K."/>
            <person name="Brown D."/>
            <person name="Brown S."/>
            <person name="Chillingworth T."/>
            <person name="Churcher C.M."/>
            <person name="Collins M."/>
            <person name="Connor R."/>
            <person name="Cronin A."/>
            <person name="Davis P."/>
            <person name="Feltwell T."/>
            <person name="Fraser A."/>
            <person name="Gentles S."/>
            <person name="Goble A."/>
            <person name="Hamlin N."/>
            <person name="Harris D.E."/>
            <person name="Hidalgo J."/>
            <person name="Hodgson G."/>
            <person name="Holroyd S."/>
            <person name="Hornsby T."/>
            <person name="Howarth S."/>
            <person name="Huckle E.J."/>
            <person name="Hunt S."/>
            <person name="Jagels K."/>
            <person name="James K.D."/>
            <person name="Jones L."/>
            <person name="Jones M."/>
            <person name="Leather S."/>
            <person name="McDonald S."/>
            <person name="McLean J."/>
            <person name="Mooney P."/>
            <person name="Moule S."/>
            <person name="Mungall K.L."/>
            <person name="Murphy L.D."/>
            <person name="Niblett D."/>
            <person name="Odell C."/>
            <person name="Oliver K."/>
            <person name="O'Neil S."/>
            <person name="Pearson D."/>
            <person name="Quail M.A."/>
            <person name="Rabbinowitsch E."/>
            <person name="Rutherford K.M."/>
            <person name="Rutter S."/>
            <person name="Saunders D."/>
            <person name="Seeger K."/>
            <person name="Sharp S."/>
            <person name="Skelton J."/>
            <person name="Simmonds M.N."/>
            <person name="Squares R."/>
            <person name="Squares S."/>
            <person name="Stevens K."/>
            <person name="Taylor K."/>
            <person name="Taylor R.G."/>
            <person name="Tivey A."/>
            <person name="Walsh S.V."/>
            <person name="Warren T."/>
            <person name="Whitehead S."/>
            <person name="Woodward J.R."/>
            <person name="Volckaert G."/>
            <person name="Aert R."/>
            <person name="Robben J."/>
            <person name="Grymonprez B."/>
            <person name="Weltjens I."/>
            <person name="Vanstreels E."/>
            <person name="Rieger M."/>
            <person name="Schaefer M."/>
            <person name="Mueller-Auer S."/>
            <person name="Gabel C."/>
            <person name="Fuchs M."/>
            <person name="Duesterhoeft A."/>
            <person name="Fritzc C."/>
            <person name="Holzer E."/>
            <person name="Moestl D."/>
            <person name="Hilbert H."/>
            <person name="Borzym K."/>
            <person name="Langer I."/>
            <person name="Beck A."/>
            <person name="Lehrach H."/>
            <person name="Reinhardt R."/>
            <person name="Pohl T.M."/>
            <person name="Eger P."/>
            <person name="Zimmermann W."/>
            <person name="Wedler H."/>
            <person name="Wambutt R."/>
            <person name="Purnelle B."/>
            <person name="Goffeau A."/>
            <person name="Cadieu E."/>
            <person name="Dreano S."/>
            <person name="Gloux S."/>
            <person name="Lelaure V."/>
            <person name="Mottier S."/>
            <person name="Galibert F."/>
            <person name="Aves S.J."/>
            <person name="Xiang Z."/>
            <person name="Hunt C."/>
            <person name="Moore K."/>
            <person name="Hurst S.M."/>
            <person name="Lucas M."/>
            <person name="Rochet M."/>
            <person name="Gaillardin C."/>
            <person name="Tallada V.A."/>
            <person name="Garzon A."/>
            <person name="Thode G."/>
            <person name="Daga R.R."/>
            <person name="Cruzado L."/>
            <person name="Jimenez J."/>
            <person name="Sanchez M."/>
            <person name="del Rey F."/>
            <person name="Benito J."/>
            <person name="Dominguez A."/>
            <person name="Revuelta J.L."/>
            <person name="Moreno S."/>
            <person name="Armstrong J."/>
            <person name="Forsburg S.L."/>
            <person name="Cerutti L."/>
            <person name="Lowe T."/>
            <person name="McCombie W.R."/>
            <person name="Paulsen I."/>
            <person name="Potashkin J."/>
            <person name="Shpakovski G.V."/>
            <person name="Ussery D."/>
            <person name="Barrell B.G."/>
            <person name="Nurse P."/>
        </authorList>
    </citation>
    <scope>NUCLEOTIDE SEQUENCE [LARGE SCALE GENOMIC DNA]</scope>
    <source>
        <strain>972 / ATCC 24843</strain>
    </source>
</reference>
<reference key="2">
    <citation type="journal article" date="2006" name="Nat. Biotechnol.">
        <title>ORFeome cloning and global analysis of protein localization in the fission yeast Schizosaccharomyces pombe.</title>
        <authorList>
            <person name="Matsuyama A."/>
            <person name="Arai R."/>
            <person name="Yashiroda Y."/>
            <person name="Shirai A."/>
            <person name="Kamata A."/>
            <person name="Sekido S."/>
            <person name="Kobayashi Y."/>
            <person name="Hashimoto A."/>
            <person name="Hamamoto M."/>
            <person name="Hiraoka Y."/>
            <person name="Horinouchi S."/>
            <person name="Yoshida M."/>
        </authorList>
    </citation>
    <scope>SUBCELLULAR LOCATION [LARGE SCALE ANALYSIS]</scope>
</reference>
<keyword id="KW-0963">Cytoplasm</keyword>
<keyword id="KW-0488">Methylation</keyword>
<keyword id="KW-0539">Nucleus</keyword>
<keyword id="KW-1185">Reference proteome</keyword>
<keyword id="KW-0687">Ribonucleoprotein</keyword>
<keyword id="KW-0689">Ribosomal protein</keyword>
<keyword id="KW-0694">RNA-binding</keyword>
<sequence>MPPKFDPNEVKTIFMRAVGGEVAGGSTLAPKIGPLGLSPKKVGEDIAKATKDWKGLRVTVKLTIQNRQAAVSVVPSASALVIKALKEPARDRKKDKNVAHSGNVSLDEIIEVARTMRFKSLAKELSGTVKEILGTAFSVGCTVDGKNPHDVQKEIDNGEIEIPQE</sequence>
<protein>
    <recommendedName>
        <fullName evidence="4">Large ribosomal subunit protein uL11A</fullName>
    </recommendedName>
    <alternativeName>
        <fullName>60S ribosomal protein L12-A</fullName>
    </alternativeName>
</protein>
<dbReference type="EMBL" id="CU329672">
    <property type="protein sequence ID" value="CAA20752.1"/>
    <property type="molecule type" value="Genomic_DNA"/>
</dbReference>
<dbReference type="PIR" id="T41103">
    <property type="entry name" value="T41103"/>
</dbReference>
<dbReference type="RefSeq" id="NP_587923.1">
    <property type="nucleotide sequence ID" value="NM_001022914.2"/>
</dbReference>
<dbReference type="SMR" id="P0CT83"/>
<dbReference type="FunCoup" id="P0CT83">
    <property type="interactions" value="436"/>
</dbReference>
<dbReference type="STRING" id="284812.P0CT83"/>
<dbReference type="iPTMnet" id="P0CT83"/>
<dbReference type="PaxDb" id="4896-SPCC16C4.13c.1"/>
<dbReference type="EnsemblFungi" id="SPCC16C4.13c.1">
    <property type="protein sequence ID" value="SPCC16C4.13c.1:pep"/>
    <property type="gene ID" value="SPCC16C4.13c"/>
</dbReference>
<dbReference type="EnsemblFungi" id="SPCC31H12.04c.1">
    <property type="protein sequence ID" value="SPCC31H12.04c.1:pep"/>
    <property type="gene ID" value="SPCC31H12.04c"/>
</dbReference>
<dbReference type="GeneID" id="2539186"/>
<dbReference type="KEGG" id="spo:2539010"/>
<dbReference type="KEGG" id="spo:2539186"/>
<dbReference type="PomBase" id="SPCC16C4.13c">
    <property type="gene designation" value="rpl1201"/>
</dbReference>
<dbReference type="VEuPathDB" id="FungiDB:SPCC16C4.13c"/>
<dbReference type="VEuPathDB" id="FungiDB:SPCC31H12.04c"/>
<dbReference type="eggNOG" id="KOG0886">
    <property type="taxonomic scope" value="Eukaryota"/>
</dbReference>
<dbReference type="InParanoid" id="P0CT83"/>
<dbReference type="OMA" id="QPPHDVI"/>
<dbReference type="PhylomeDB" id="P0CT83"/>
<dbReference type="Reactome" id="R-SPO-156827">
    <property type="pathway name" value="L13a-mediated translational silencing of Ceruloplasmin expression"/>
</dbReference>
<dbReference type="Reactome" id="R-SPO-1799339">
    <property type="pathway name" value="SRP-dependent cotranslational protein targeting to membrane"/>
</dbReference>
<dbReference type="Reactome" id="R-SPO-72689">
    <property type="pathway name" value="Formation of a pool of free 40S subunits"/>
</dbReference>
<dbReference type="Reactome" id="R-SPO-72706">
    <property type="pathway name" value="GTP hydrolysis and joining of the 60S ribosomal subunit"/>
</dbReference>
<dbReference type="Reactome" id="R-SPO-975956">
    <property type="pathway name" value="Nonsense Mediated Decay (NMD) independent of the Exon Junction Complex (EJC)"/>
</dbReference>
<dbReference type="Reactome" id="R-SPO-975957">
    <property type="pathway name" value="Nonsense Mediated Decay (NMD) enhanced by the Exon Junction Complex (EJC)"/>
</dbReference>
<dbReference type="PRO" id="PR:P0CT83"/>
<dbReference type="Proteomes" id="UP000002485">
    <property type="component" value="Chromosome III"/>
</dbReference>
<dbReference type="GO" id="GO:0005829">
    <property type="term" value="C:cytosol"/>
    <property type="evidence" value="ECO:0007005"/>
    <property type="project" value="PomBase"/>
</dbReference>
<dbReference type="GO" id="GO:0022625">
    <property type="term" value="C:cytosolic large ribosomal subunit"/>
    <property type="evidence" value="ECO:0000318"/>
    <property type="project" value="GO_Central"/>
</dbReference>
<dbReference type="GO" id="GO:0005730">
    <property type="term" value="C:nucleolus"/>
    <property type="evidence" value="ECO:0007005"/>
    <property type="project" value="PomBase"/>
</dbReference>
<dbReference type="GO" id="GO:0070180">
    <property type="term" value="F:large ribosomal subunit rRNA binding"/>
    <property type="evidence" value="ECO:0000318"/>
    <property type="project" value="GO_Central"/>
</dbReference>
<dbReference type="GO" id="GO:0003735">
    <property type="term" value="F:structural constituent of ribosome"/>
    <property type="evidence" value="ECO:0000318"/>
    <property type="project" value="GO_Central"/>
</dbReference>
<dbReference type="GO" id="GO:0002181">
    <property type="term" value="P:cytoplasmic translation"/>
    <property type="evidence" value="ECO:0000266"/>
    <property type="project" value="PomBase"/>
</dbReference>
<dbReference type="GO" id="GO:0180023">
    <property type="term" value="P:cytosolic large ribosomal subunit assembly"/>
    <property type="evidence" value="ECO:0000266"/>
    <property type="project" value="PomBase"/>
</dbReference>
<dbReference type="GO" id="GO:0006412">
    <property type="term" value="P:translation"/>
    <property type="evidence" value="ECO:0000318"/>
    <property type="project" value="GO_Central"/>
</dbReference>
<dbReference type="FunFam" id="1.10.10.250:FF:000002">
    <property type="entry name" value="60S ribosomal protein L12"/>
    <property type="match status" value="1"/>
</dbReference>
<dbReference type="FunFam" id="3.30.1550.10:FF:000002">
    <property type="entry name" value="60S ribosomal protein L12"/>
    <property type="match status" value="1"/>
</dbReference>
<dbReference type="Gene3D" id="1.10.10.250">
    <property type="entry name" value="Ribosomal protein L11, C-terminal domain"/>
    <property type="match status" value="1"/>
</dbReference>
<dbReference type="Gene3D" id="3.30.1550.10">
    <property type="entry name" value="Ribosomal protein L11/L12, N-terminal domain"/>
    <property type="match status" value="1"/>
</dbReference>
<dbReference type="HAMAP" id="MF_00736">
    <property type="entry name" value="Ribosomal_uL11"/>
    <property type="match status" value="1"/>
</dbReference>
<dbReference type="InterPro" id="IPR000911">
    <property type="entry name" value="Ribosomal_uL11"/>
</dbReference>
<dbReference type="InterPro" id="IPR020783">
    <property type="entry name" value="Ribosomal_uL11_C"/>
</dbReference>
<dbReference type="InterPro" id="IPR036769">
    <property type="entry name" value="Ribosomal_uL11_C_sf"/>
</dbReference>
<dbReference type="InterPro" id="IPR020785">
    <property type="entry name" value="Ribosomal_uL11_CS"/>
</dbReference>
<dbReference type="InterPro" id="IPR020784">
    <property type="entry name" value="Ribosomal_uL11_N"/>
</dbReference>
<dbReference type="InterPro" id="IPR036796">
    <property type="entry name" value="Ribosomal_uL11_N_sf"/>
</dbReference>
<dbReference type="PANTHER" id="PTHR11661">
    <property type="entry name" value="60S RIBOSOMAL PROTEIN L12"/>
    <property type="match status" value="1"/>
</dbReference>
<dbReference type="PANTHER" id="PTHR11661:SF2">
    <property type="entry name" value="LARGE RIBOSOMAL SUBUNIT PROTEIN UL11"/>
    <property type="match status" value="1"/>
</dbReference>
<dbReference type="Pfam" id="PF00298">
    <property type="entry name" value="Ribosomal_L11"/>
    <property type="match status" value="1"/>
</dbReference>
<dbReference type="Pfam" id="PF03946">
    <property type="entry name" value="Ribosomal_L11_N"/>
    <property type="match status" value="1"/>
</dbReference>
<dbReference type="SMART" id="SM00649">
    <property type="entry name" value="RL11"/>
    <property type="match status" value="1"/>
</dbReference>
<dbReference type="SUPFAM" id="SSF54747">
    <property type="entry name" value="Ribosomal L11/L12e N-terminal domain"/>
    <property type="match status" value="1"/>
</dbReference>
<dbReference type="SUPFAM" id="SSF46906">
    <property type="entry name" value="Ribosomal protein L11, C-terminal domain"/>
    <property type="match status" value="1"/>
</dbReference>
<dbReference type="PROSITE" id="PS00359">
    <property type="entry name" value="RIBOSOMAL_L11"/>
    <property type="match status" value="1"/>
</dbReference>